<name>H4_MASBA</name>
<evidence type="ECO:0000250" key="1"/>
<evidence type="ECO:0000256" key="2">
    <source>
        <dbReference type="SAM" id="MobiDB-lite"/>
    </source>
</evidence>
<evidence type="ECO:0000305" key="3"/>
<comment type="function">
    <text>Core component of nucleosome. Nucleosomes wrap and compact DNA into chromatin, limiting DNA accessibility to the cellular machineries which require DNA as a template. Histones thereby play a central role in transcription regulation, DNA repair, DNA replication and chromosomal stability. DNA accessibility is regulated via a complex set of post-translational modifications of histones, also called histone code, and nucleosome remodeling.</text>
</comment>
<comment type="subunit">
    <text>The nucleosome is a histone octamer containing two molecules each of H2A, H2B, H3 and H4 assembled in one H3-H4 heterotetramer and two H2A-H2B heterodimers. The octamer wraps approximately 147 bp of DNA.</text>
</comment>
<comment type="subcellular location">
    <subcellularLocation>
        <location evidence="1">Nucleus</location>
    </subcellularLocation>
    <subcellularLocation>
        <location evidence="1">Chromosome</location>
    </subcellularLocation>
</comment>
<comment type="similarity">
    <text evidence="3">Belongs to the histone H4 family.</text>
</comment>
<feature type="initiator methionine" description="Removed" evidence="1">
    <location>
        <position position="1"/>
    </location>
</feature>
<feature type="chain" id="PRO_0000158326" description="Histone H4">
    <location>
        <begin position="2"/>
        <end position="108"/>
    </location>
</feature>
<feature type="DNA-binding region">
    <location>
        <begin position="17"/>
        <end position="21"/>
    </location>
</feature>
<feature type="region of interest" description="Disordered" evidence="2">
    <location>
        <begin position="1"/>
        <end position="24"/>
    </location>
</feature>
<reference key="1">
    <citation type="submission" date="1999-04" db="EMBL/GenBank/DDBJ databases">
        <title>Core histones from Phreatamoeba balamuthi.</title>
        <authorList>
            <person name="Wu G."/>
            <person name="Muller M."/>
        </authorList>
    </citation>
    <scope>NUCLEOTIDE SEQUENCE [MRNA]</scope>
    <source>
        <strain>ATCC 30984</strain>
    </source>
</reference>
<dbReference type="EMBL" id="AF140034">
    <property type="protein sequence ID" value="AAF00589.1"/>
    <property type="molecule type" value="mRNA"/>
</dbReference>
<dbReference type="SMR" id="Q9U7D0"/>
<dbReference type="VEuPathDB" id="AmoebaDB:MBAL_011836"/>
<dbReference type="GO" id="GO:0000786">
    <property type="term" value="C:nucleosome"/>
    <property type="evidence" value="ECO:0007669"/>
    <property type="project" value="UniProtKB-KW"/>
</dbReference>
<dbReference type="GO" id="GO:0005634">
    <property type="term" value="C:nucleus"/>
    <property type="evidence" value="ECO:0007669"/>
    <property type="project" value="UniProtKB-SubCell"/>
</dbReference>
<dbReference type="GO" id="GO:0003677">
    <property type="term" value="F:DNA binding"/>
    <property type="evidence" value="ECO:0007669"/>
    <property type="project" value="UniProtKB-KW"/>
</dbReference>
<dbReference type="GO" id="GO:0046982">
    <property type="term" value="F:protein heterodimerization activity"/>
    <property type="evidence" value="ECO:0007669"/>
    <property type="project" value="InterPro"/>
</dbReference>
<dbReference type="GO" id="GO:0030527">
    <property type="term" value="F:structural constituent of chromatin"/>
    <property type="evidence" value="ECO:0007669"/>
    <property type="project" value="InterPro"/>
</dbReference>
<dbReference type="CDD" id="cd22912">
    <property type="entry name" value="HFD_H4"/>
    <property type="match status" value="1"/>
</dbReference>
<dbReference type="FunFam" id="1.10.20.10:FF:000002">
    <property type="entry name" value="Histone H4"/>
    <property type="match status" value="1"/>
</dbReference>
<dbReference type="Gene3D" id="1.10.20.10">
    <property type="entry name" value="Histone, subunit A"/>
    <property type="match status" value="1"/>
</dbReference>
<dbReference type="InterPro" id="IPR035425">
    <property type="entry name" value="CENP-T/H4_C"/>
</dbReference>
<dbReference type="InterPro" id="IPR009072">
    <property type="entry name" value="Histone-fold"/>
</dbReference>
<dbReference type="InterPro" id="IPR001951">
    <property type="entry name" value="Histone_H4"/>
</dbReference>
<dbReference type="InterPro" id="IPR019809">
    <property type="entry name" value="Histone_H4_CS"/>
</dbReference>
<dbReference type="PANTHER" id="PTHR10484">
    <property type="entry name" value="HISTONE H4"/>
    <property type="match status" value="1"/>
</dbReference>
<dbReference type="Pfam" id="PF15511">
    <property type="entry name" value="CENP-T_C"/>
    <property type="match status" value="1"/>
</dbReference>
<dbReference type="PRINTS" id="PR00623">
    <property type="entry name" value="HISTONEH4"/>
</dbReference>
<dbReference type="SMART" id="SM00417">
    <property type="entry name" value="H4"/>
    <property type="match status" value="1"/>
</dbReference>
<dbReference type="SUPFAM" id="SSF47113">
    <property type="entry name" value="Histone-fold"/>
    <property type="match status" value="1"/>
</dbReference>
<dbReference type="PROSITE" id="PS00047">
    <property type="entry name" value="HISTONE_H4"/>
    <property type="match status" value="1"/>
</dbReference>
<proteinExistence type="inferred from homology"/>
<protein>
    <recommendedName>
        <fullName>Histone H4</fullName>
    </recommendedName>
</protein>
<accession>Q9U7D0</accession>
<keyword id="KW-0158">Chromosome</keyword>
<keyword id="KW-0238">DNA-binding</keyword>
<keyword id="KW-0544">Nucleosome core</keyword>
<keyword id="KW-0539">Nucleus</keyword>
<sequence length="108" mass="11910">MTGRGKGGKVLSLGGKGGKGAKRHRKVLRDNIQGITKPAIRRLARRGGVKRISGLIYEETRGVLKVFLENVIRDSVTYTEHARRKTVTAMDVVYALKRQGRTLYGFGG</sequence>
<organism>
    <name type="scientific">Mastigamoeba balamuthi</name>
    <name type="common">Phreatamoeba balamuthi</name>
    <dbReference type="NCBI Taxonomy" id="108607"/>
    <lineage>
        <taxon>Eukaryota</taxon>
        <taxon>Amoebozoa</taxon>
        <taxon>Evosea</taxon>
        <taxon>Archamoebae</taxon>
        <taxon>Mastigamoebida</taxon>
        <taxon>Mastigamoebidae</taxon>
        <taxon>Mastigamoeba</taxon>
    </lineage>
</organism>